<organism>
    <name type="scientific">Coxiella burnetii (strain Dugway 5J108-111)</name>
    <dbReference type="NCBI Taxonomy" id="434922"/>
    <lineage>
        <taxon>Bacteria</taxon>
        <taxon>Pseudomonadati</taxon>
        <taxon>Pseudomonadota</taxon>
        <taxon>Gammaproteobacteria</taxon>
        <taxon>Legionellales</taxon>
        <taxon>Coxiellaceae</taxon>
        <taxon>Coxiella</taxon>
    </lineage>
</organism>
<sequence>MLKDIHQHRILILDFSSQYAQLIARRVREIGVYCELMPCDIDEETIRDFNPHGIILSGGPETVTLSHTLRAPAFIFEIGCPVLGICYGMQTMAYQLGGKVNRTAKAEFGHAQLRVLNPAFLFDGIEDQVSPQGEPLLDVWMSHGDIVSELPPGFEATACTDNSPLAAMADFKRRFFGLQFHPEVTHTPQGHRILAHFVIHICQCIPNWTTKHIIEDSIRDIQEKVGKEQVIVGLSGGVDSAVTATLVHKAIGDQLVCVLVDTGLLRLNEVDEVLNVFQKHLGAKVICVDAKDRFMKALKGISDPEEKRKIAGEQFIRVFEEQAKKLNVKWLGQGTIYPDVIESAKTKTGKGHIIKTHHNVGGLPLNMELKLIEPLRELFKDEVRKLGLELGLPADLIYRHPFPGPGLAIRILGEVNAEYINILKQADAIFIEELKKSDYYHQVSQAFAVFMPLKSVGVKGDARHYGYIIALRAVKTVDFMTAQWADLPHEFLSKVSHRIVNEIKEVSRVVYDMTNKPPATIEWE</sequence>
<evidence type="ECO:0000255" key="1">
    <source>
        <dbReference type="HAMAP-Rule" id="MF_00344"/>
    </source>
</evidence>
<dbReference type="EC" id="6.3.5.2" evidence="1"/>
<dbReference type="EMBL" id="CP000733">
    <property type="protein sequence ID" value="ABS77340.1"/>
    <property type="molecule type" value="Genomic_DNA"/>
</dbReference>
<dbReference type="RefSeq" id="WP_011997080.1">
    <property type="nucleotide sequence ID" value="NC_009727.1"/>
</dbReference>
<dbReference type="SMR" id="A9KGD5"/>
<dbReference type="KEGG" id="cbd:CBUD_1430"/>
<dbReference type="HOGENOM" id="CLU_014340_0_5_6"/>
<dbReference type="UniPathway" id="UPA00189">
    <property type="reaction ID" value="UER00296"/>
</dbReference>
<dbReference type="Proteomes" id="UP000008555">
    <property type="component" value="Chromosome"/>
</dbReference>
<dbReference type="GO" id="GO:0005829">
    <property type="term" value="C:cytosol"/>
    <property type="evidence" value="ECO:0007669"/>
    <property type="project" value="TreeGrafter"/>
</dbReference>
<dbReference type="GO" id="GO:0005524">
    <property type="term" value="F:ATP binding"/>
    <property type="evidence" value="ECO:0007669"/>
    <property type="project" value="UniProtKB-UniRule"/>
</dbReference>
<dbReference type="GO" id="GO:0003921">
    <property type="term" value="F:GMP synthase activity"/>
    <property type="evidence" value="ECO:0007669"/>
    <property type="project" value="InterPro"/>
</dbReference>
<dbReference type="CDD" id="cd01742">
    <property type="entry name" value="GATase1_GMP_Synthase"/>
    <property type="match status" value="1"/>
</dbReference>
<dbReference type="CDD" id="cd01997">
    <property type="entry name" value="GMP_synthase_C"/>
    <property type="match status" value="1"/>
</dbReference>
<dbReference type="FunFam" id="3.30.300.10:FF:000002">
    <property type="entry name" value="GMP synthase [glutamine-hydrolyzing]"/>
    <property type="match status" value="1"/>
</dbReference>
<dbReference type="FunFam" id="3.40.50.620:FF:000001">
    <property type="entry name" value="GMP synthase [glutamine-hydrolyzing]"/>
    <property type="match status" value="1"/>
</dbReference>
<dbReference type="FunFam" id="3.40.50.880:FF:000001">
    <property type="entry name" value="GMP synthase [glutamine-hydrolyzing]"/>
    <property type="match status" value="1"/>
</dbReference>
<dbReference type="Gene3D" id="3.30.300.10">
    <property type="match status" value="1"/>
</dbReference>
<dbReference type="Gene3D" id="3.40.50.880">
    <property type="match status" value="1"/>
</dbReference>
<dbReference type="Gene3D" id="3.40.50.620">
    <property type="entry name" value="HUPs"/>
    <property type="match status" value="1"/>
</dbReference>
<dbReference type="HAMAP" id="MF_00344">
    <property type="entry name" value="GMP_synthase"/>
    <property type="match status" value="1"/>
</dbReference>
<dbReference type="InterPro" id="IPR029062">
    <property type="entry name" value="Class_I_gatase-like"/>
</dbReference>
<dbReference type="InterPro" id="IPR017926">
    <property type="entry name" value="GATASE"/>
</dbReference>
<dbReference type="InterPro" id="IPR001674">
    <property type="entry name" value="GMP_synth_C"/>
</dbReference>
<dbReference type="InterPro" id="IPR004739">
    <property type="entry name" value="GMP_synth_GATase"/>
</dbReference>
<dbReference type="InterPro" id="IPR022955">
    <property type="entry name" value="GMP_synthase"/>
</dbReference>
<dbReference type="InterPro" id="IPR025777">
    <property type="entry name" value="GMPS_ATP_PPase_dom"/>
</dbReference>
<dbReference type="InterPro" id="IPR022310">
    <property type="entry name" value="NAD/GMP_synthase"/>
</dbReference>
<dbReference type="InterPro" id="IPR014729">
    <property type="entry name" value="Rossmann-like_a/b/a_fold"/>
</dbReference>
<dbReference type="NCBIfam" id="TIGR00884">
    <property type="entry name" value="guaA_Cterm"/>
    <property type="match status" value="1"/>
</dbReference>
<dbReference type="NCBIfam" id="TIGR00888">
    <property type="entry name" value="guaA_Nterm"/>
    <property type="match status" value="1"/>
</dbReference>
<dbReference type="NCBIfam" id="NF000848">
    <property type="entry name" value="PRK00074.1"/>
    <property type="match status" value="1"/>
</dbReference>
<dbReference type="PANTHER" id="PTHR11922:SF2">
    <property type="entry name" value="GMP SYNTHASE [GLUTAMINE-HYDROLYZING]"/>
    <property type="match status" value="1"/>
</dbReference>
<dbReference type="PANTHER" id="PTHR11922">
    <property type="entry name" value="GMP SYNTHASE-RELATED"/>
    <property type="match status" value="1"/>
</dbReference>
<dbReference type="Pfam" id="PF00117">
    <property type="entry name" value="GATase"/>
    <property type="match status" value="1"/>
</dbReference>
<dbReference type="Pfam" id="PF00958">
    <property type="entry name" value="GMP_synt_C"/>
    <property type="match status" value="1"/>
</dbReference>
<dbReference type="Pfam" id="PF02540">
    <property type="entry name" value="NAD_synthase"/>
    <property type="match status" value="1"/>
</dbReference>
<dbReference type="PRINTS" id="PR00097">
    <property type="entry name" value="ANTSNTHASEII"/>
</dbReference>
<dbReference type="PRINTS" id="PR00096">
    <property type="entry name" value="GATASE"/>
</dbReference>
<dbReference type="SUPFAM" id="SSF52402">
    <property type="entry name" value="Adenine nucleotide alpha hydrolases-like"/>
    <property type="match status" value="1"/>
</dbReference>
<dbReference type="SUPFAM" id="SSF52317">
    <property type="entry name" value="Class I glutamine amidotransferase-like"/>
    <property type="match status" value="1"/>
</dbReference>
<dbReference type="SUPFAM" id="SSF54810">
    <property type="entry name" value="GMP synthetase C-terminal dimerisation domain"/>
    <property type="match status" value="1"/>
</dbReference>
<dbReference type="PROSITE" id="PS51273">
    <property type="entry name" value="GATASE_TYPE_1"/>
    <property type="match status" value="1"/>
</dbReference>
<dbReference type="PROSITE" id="PS51553">
    <property type="entry name" value="GMPS_ATP_PPASE"/>
    <property type="match status" value="1"/>
</dbReference>
<reference key="1">
    <citation type="journal article" date="2009" name="Infect. Immun.">
        <title>Comparative genomics reveal extensive transposon-mediated genomic plasticity and diversity among potential effector proteins within the genus Coxiella.</title>
        <authorList>
            <person name="Beare P.A."/>
            <person name="Unsworth N."/>
            <person name="Andoh M."/>
            <person name="Voth D.E."/>
            <person name="Omsland A."/>
            <person name="Gilk S.D."/>
            <person name="Williams K.P."/>
            <person name="Sobral B.W."/>
            <person name="Kupko J.J. III"/>
            <person name="Porcella S.F."/>
            <person name="Samuel J.E."/>
            <person name="Heinzen R.A."/>
        </authorList>
    </citation>
    <scope>NUCLEOTIDE SEQUENCE [LARGE SCALE GENOMIC DNA]</scope>
    <source>
        <strain>Dugway 5J108-111</strain>
    </source>
</reference>
<name>GUAA_COXBN</name>
<keyword id="KW-0067">ATP-binding</keyword>
<keyword id="KW-0315">Glutamine amidotransferase</keyword>
<keyword id="KW-0332">GMP biosynthesis</keyword>
<keyword id="KW-0436">Ligase</keyword>
<keyword id="KW-0547">Nucleotide-binding</keyword>
<keyword id="KW-0658">Purine biosynthesis</keyword>
<comment type="function">
    <text evidence="1">Catalyzes the synthesis of GMP from XMP.</text>
</comment>
<comment type="catalytic activity">
    <reaction evidence="1">
        <text>XMP + L-glutamine + ATP + H2O = GMP + L-glutamate + AMP + diphosphate + 2 H(+)</text>
        <dbReference type="Rhea" id="RHEA:11680"/>
        <dbReference type="ChEBI" id="CHEBI:15377"/>
        <dbReference type="ChEBI" id="CHEBI:15378"/>
        <dbReference type="ChEBI" id="CHEBI:29985"/>
        <dbReference type="ChEBI" id="CHEBI:30616"/>
        <dbReference type="ChEBI" id="CHEBI:33019"/>
        <dbReference type="ChEBI" id="CHEBI:57464"/>
        <dbReference type="ChEBI" id="CHEBI:58115"/>
        <dbReference type="ChEBI" id="CHEBI:58359"/>
        <dbReference type="ChEBI" id="CHEBI:456215"/>
        <dbReference type="EC" id="6.3.5.2"/>
    </reaction>
</comment>
<comment type="pathway">
    <text evidence="1">Purine metabolism; GMP biosynthesis; GMP from XMP (L-Gln route): step 1/1.</text>
</comment>
<comment type="subunit">
    <text evidence="1">Homodimer.</text>
</comment>
<feature type="chain" id="PRO_1000120268" description="GMP synthase [glutamine-hydrolyzing]">
    <location>
        <begin position="1"/>
        <end position="524"/>
    </location>
</feature>
<feature type="domain" description="Glutamine amidotransferase type-1" evidence="1">
    <location>
        <begin position="9"/>
        <end position="207"/>
    </location>
</feature>
<feature type="domain" description="GMPS ATP-PPase" evidence="1">
    <location>
        <begin position="208"/>
        <end position="399"/>
    </location>
</feature>
<feature type="active site" description="Nucleophile" evidence="1">
    <location>
        <position position="86"/>
    </location>
</feature>
<feature type="active site" evidence="1">
    <location>
        <position position="181"/>
    </location>
</feature>
<feature type="active site" evidence="1">
    <location>
        <position position="183"/>
    </location>
</feature>
<feature type="binding site" evidence="1">
    <location>
        <begin position="235"/>
        <end position="241"/>
    </location>
    <ligand>
        <name>ATP</name>
        <dbReference type="ChEBI" id="CHEBI:30616"/>
    </ligand>
</feature>
<accession>A9KGD5</accession>
<gene>
    <name evidence="1" type="primary">guaA</name>
    <name type="ordered locus">CBUD_1430</name>
</gene>
<proteinExistence type="inferred from homology"/>
<protein>
    <recommendedName>
        <fullName evidence="1">GMP synthase [glutamine-hydrolyzing]</fullName>
        <ecNumber evidence="1">6.3.5.2</ecNumber>
    </recommendedName>
    <alternativeName>
        <fullName evidence="1">GMP synthetase</fullName>
    </alternativeName>
    <alternativeName>
        <fullName evidence="1">Glutamine amidotransferase</fullName>
    </alternativeName>
</protein>